<comment type="miscellaneous">
    <text evidence="1">Primate-specific FAM90A gene family, thought to have arisen during multiple duplication and rearrangement events.</text>
</comment>
<comment type="similarity">
    <text evidence="3">Belongs to the FAM90 family.</text>
</comment>
<protein>
    <recommendedName>
        <fullName>Protein FAM90A13</fullName>
    </recommendedName>
</protein>
<proteinExistence type="evidence at protein level"/>
<accession>P0C7W8</accession>
<reference key="1">
    <citation type="journal article" date="2006" name="Nature">
        <title>DNA sequence and analysis of human chromosome 8.</title>
        <authorList>
            <person name="Nusbaum C."/>
            <person name="Mikkelsen T.S."/>
            <person name="Zody M.C."/>
            <person name="Asakawa S."/>
            <person name="Taudien S."/>
            <person name="Garber M."/>
            <person name="Kodira C.D."/>
            <person name="Schueler M.G."/>
            <person name="Shimizu A."/>
            <person name="Whittaker C.A."/>
            <person name="Chang J.L."/>
            <person name="Cuomo C.A."/>
            <person name="Dewar K."/>
            <person name="FitzGerald M.G."/>
            <person name="Yang X."/>
            <person name="Allen N.R."/>
            <person name="Anderson S."/>
            <person name="Asakawa T."/>
            <person name="Blechschmidt K."/>
            <person name="Bloom T."/>
            <person name="Borowsky M.L."/>
            <person name="Butler J."/>
            <person name="Cook A."/>
            <person name="Corum B."/>
            <person name="DeArellano K."/>
            <person name="DeCaprio D."/>
            <person name="Dooley K.T."/>
            <person name="Dorris L. III"/>
            <person name="Engels R."/>
            <person name="Gloeckner G."/>
            <person name="Hafez N."/>
            <person name="Hagopian D.S."/>
            <person name="Hall J.L."/>
            <person name="Ishikawa S.K."/>
            <person name="Jaffe D.B."/>
            <person name="Kamat A."/>
            <person name="Kudoh J."/>
            <person name="Lehmann R."/>
            <person name="Lokitsang T."/>
            <person name="Macdonald P."/>
            <person name="Major J.E."/>
            <person name="Matthews C.D."/>
            <person name="Mauceli E."/>
            <person name="Menzel U."/>
            <person name="Mihalev A.H."/>
            <person name="Minoshima S."/>
            <person name="Murayama Y."/>
            <person name="Naylor J.W."/>
            <person name="Nicol R."/>
            <person name="Nguyen C."/>
            <person name="O'Leary S.B."/>
            <person name="O'Neill K."/>
            <person name="Parker S.C.J."/>
            <person name="Polley A."/>
            <person name="Raymond C.K."/>
            <person name="Reichwald K."/>
            <person name="Rodriguez J."/>
            <person name="Sasaki T."/>
            <person name="Schilhabel M."/>
            <person name="Siddiqui R."/>
            <person name="Smith C.L."/>
            <person name="Sneddon T.P."/>
            <person name="Talamas J.A."/>
            <person name="Tenzin P."/>
            <person name="Topham K."/>
            <person name="Venkataraman V."/>
            <person name="Wen G."/>
            <person name="Yamazaki S."/>
            <person name="Young S.K."/>
            <person name="Zeng Q."/>
            <person name="Zimmer A.R."/>
            <person name="Rosenthal A."/>
            <person name="Birren B.W."/>
            <person name="Platzer M."/>
            <person name="Shimizu N."/>
            <person name="Lander E.S."/>
        </authorList>
    </citation>
    <scope>NUCLEOTIDE SEQUENCE [LARGE SCALE GENOMIC DNA]</scope>
</reference>
<reference key="2">
    <citation type="journal article" date="2007" name="Hum. Mol. Genet.">
        <title>Characterization and evolution of the novel gene family FAM90A in primates originated by multiple duplication and rearrangement events.</title>
        <authorList>
            <person name="Bosch N."/>
            <person name="Caceres M."/>
            <person name="Cardone M.F."/>
            <person name="Carreras A."/>
            <person name="Ballana E."/>
            <person name="Rocchi M."/>
            <person name="Armengol L."/>
            <person name="Estivill X."/>
        </authorList>
    </citation>
    <scope>CHARACTERIZATION</scope>
</reference>
<dbReference type="EMBL" id="AF228730">
    <property type="status" value="NOT_ANNOTATED_CDS"/>
    <property type="molecule type" value="Genomic_DNA"/>
</dbReference>
<dbReference type="RefSeq" id="NP_001410455.1">
    <property type="nucleotide sequence ID" value="NM_001423526.1"/>
</dbReference>
<dbReference type="BioMuta" id="HGNC:32261"/>
<dbReference type="DMDM" id="205831471"/>
<dbReference type="MassIVE" id="P0C7W8"/>
<dbReference type="Ensembl" id="ENST00000534703.1">
    <property type="protein sequence ID" value="ENSP00000514263.1"/>
    <property type="gene ID" value="ENSG00000223885.4"/>
</dbReference>
<dbReference type="GeneID" id="441314"/>
<dbReference type="MANE-Select" id="ENST00000534703.1">
    <property type="protein sequence ID" value="ENSP00000514263.1"/>
    <property type="RefSeq nucleotide sequence ID" value="NM_001423526.1"/>
    <property type="RefSeq protein sequence ID" value="NP_001410455.1"/>
</dbReference>
<dbReference type="AGR" id="HGNC:32261"/>
<dbReference type="GeneCards" id="FAM90A13"/>
<dbReference type="HGNC" id="HGNC:32261">
    <property type="gene designation" value="FAM90A13"/>
</dbReference>
<dbReference type="HPA" id="ENSG00000223885">
    <property type="expression patterns" value="Not detected"/>
</dbReference>
<dbReference type="MIM" id="613049">
    <property type="type" value="gene"/>
</dbReference>
<dbReference type="neXtProt" id="NX_P0C7W8"/>
<dbReference type="PharmGKB" id="PA142671808"/>
<dbReference type="GeneTree" id="ENSGT00910000144208"/>
<dbReference type="InParanoid" id="P0C7W8"/>
<dbReference type="PAN-GO" id="P0C7W8">
    <property type="GO annotations" value="0 GO annotations based on evolutionary models"/>
</dbReference>
<dbReference type="PhylomeDB" id="P0C7W8"/>
<dbReference type="Pharos" id="P0C7W8">
    <property type="development level" value="Tdark"/>
</dbReference>
<dbReference type="PRO" id="PR:P0C7W8"/>
<dbReference type="Proteomes" id="UP000005640">
    <property type="component" value="Chromosome 8"/>
</dbReference>
<dbReference type="RNAct" id="P0C7W8">
    <property type="molecule type" value="protein"/>
</dbReference>
<dbReference type="InterPro" id="IPR039213">
    <property type="entry name" value="FAM90"/>
</dbReference>
<dbReference type="InterPro" id="IPR041670">
    <property type="entry name" value="Znf-CCHC_6"/>
</dbReference>
<dbReference type="PANTHER" id="PTHR16035:SF14">
    <property type="entry name" value="FAMILY WITH SEQUENCE SIMILARITY 90 MEMBER A11, PSEUDOGENE-RELATED"/>
    <property type="match status" value="1"/>
</dbReference>
<dbReference type="PANTHER" id="PTHR16035">
    <property type="entry name" value="PROTEIN FAM90A1"/>
    <property type="match status" value="1"/>
</dbReference>
<dbReference type="Pfam" id="PF15288">
    <property type="entry name" value="zf-CCHC_6"/>
    <property type="match status" value="1"/>
</dbReference>
<gene>
    <name evidence="4" type="primary">FAM90A13</name>
    <name evidence="4" type="synonym">FAM90A13P</name>
</gene>
<sequence>MMARRDPTSWAKRLVRAQTLQKQRRAPVGPRAPPPDEEDPRLKCKNCGAFGHTARSTRCPMKCWKAALVPATLGKKEGKENLKPWKPRGEANPGPLNKDKGEKEERPRQQDPQRKALLHMFSGKPPEKPLPNGKGSTEPSDYLRVASGPMPVHTTSKRPRLDPVLADRSATEMSGRGSVLASLSPLRKASLSSSSSLGPKERQTGAAADMPQPAVRHQGREPLLVVKPTHSRPEGGCREVPQAASKTHGLLQAARPQAQDKRPAVTSQPCPPAATHSLGLGSNLSFGPGAKRPAQAPIQACLNFPKKPRLGPFQIPESAIQGGELGAPENLQPPPAATELGPSTSPQMGRRTPAQVPSVDRQPPHSRPCLPTAQACTMSHHPAASHDGAQPLRVLFRRLENGRWSSSLLAAPSFHSPEKPGAFLAQSPHVSEKSEAPCVRVPPSVLYEDLQVSSSSEDSDSDLE</sequence>
<organism>
    <name type="scientific">Homo sapiens</name>
    <name type="common">Human</name>
    <dbReference type="NCBI Taxonomy" id="9606"/>
    <lineage>
        <taxon>Eukaryota</taxon>
        <taxon>Metazoa</taxon>
        <taxon>Chordata</taxon>
        <taxon>Craniata</taxon>
        <taxon>Vertebrata</taxon>
        <taxon>Euteleostomi</taxon>
        <taxon>Mammalia</taxon>
        <taxon>Eutheria</taxon>
        <taxon>Euarchontoglires</taxon>
        <taxon>Primates</taxon>
        <taxon>Haplorrhini</taxon>
        <taxon>Catarrhini</taxon>
        <taxon>Hominidae</taxon>
        <taxon>Homo</taxon>
    </lineage>
</organism>
<feature type="chain" id="PRO_0000344621" description="Protein FAM90A13">
    <location>
        <begin position="1"/>
        <end position="464"/>
    </location>
</feature>
<feature type="region of interest" description="Disordered" evidence="2">
    <location>
        <begin position="1"/>
        <end position="42"/>
    </location>
</feature>
<feature type="region of interest" description="Disordered" evidence="2">
    <location>
        <begin position="69"/>
        <end position="389"/>
    </location>
</feature>
<feature type="region of interest" description="Disordered" evidence="2">
    <location>
        <begin position="411"/>
        <end position="437"/>
    </location>
</feature>
<feature type="compositionally biased region" description="Basic and acidic residues" evidence="2">
    <location>
        <begin position="74"/>
        <end position="89"/>
    </location>
</feature>
<feature type="compositionally biased region" description="Basic and acidic residues" evidence="2">
    <location>
        <begin position="97"/>
        <end position="114"/>
    </location>
</feature>
<feature type="compositionally biased region" description="Low complexity" evidence="2">
    <location>
        <begin position="180"/>
        <end position="197"/>
    </location>
</feature>
<keyword id="KW-1185">Reference proteome</keyword>
<name>F90AD_HUMAN</name>
<evidence type="ECO:0000250" key="1">
    <source>
        <dbReference type="UniProtKB" id="A6NIJ5"/>
    </source>
</evidence>
<evidence type="ECO:0000256" key="2">
    <source>
        <dbReference type="SAM" id="MobiDB-lite"/>
    </source>
</evidence>
<evidence type="ECO:0000305" key="3"/>
<evidence type="ECO:0000312" key="4">
    <source>
        <dbReference type="HGNC" id="HGNC:32261"/>
    </source>
</evidence>